<reference key="1">
    <citation type="submission" date="2007-12" db="EMBL/GenBank/DDBJ databases">
        <title>Brucella suis ATCC 23445 whole genome shotgun sequencing project.</title>
        <authorList>
            <person name="Setubal J.C."/>
            <person name="Bowns C."/>
            <person name="Boyle S."/>
            <person name="Crasta O.R."/>
            <person name="Czar M.J."/>
            <person name="Dharmanolla C."/>
            <person name="Gillespie J.J."/>
            <person name="Kenyon R.W."/>
            <person name="Lu J."/>
            <person name="Mane S."/>
            <person name="Mohapatra S."/>
            <person name="Nagrani S."/>
            <person name="Purkayastha A."/>
            <person name="Rajasimha H.K."/>
            <person name="Shallom J.M."/>
            <person name="Shallom S."/>
            <person name="Shukla M."/>
            <person name="Snyder E.E."/>
            <person name="Sobral B.W."/>
            <person name="Wattam A.R."/>
            <person name="Will R."/>
            <person name="Williams K."/>
            <person name="Yoo H."/>
            <person name="Bruce D."/>
            <person name="Detter C."/>
            <person name="Munk C."/>
            <person name="Brettin T.S."/>
        </authorList>
    </citation>
    <scope>NUCLEOTIDE SEQUENCE [LARGE SCALE GENOMIC DNA]</scope>
    <source>
        <strain>ATCC 23445 / NCTC 10510</strain>
    </source>
</reference>
<name>PDXH_BRUSI</name>
<organism>
    <name type="scientific">Brucella suis (strain ATCC 23445 / NCTC 10510)</name>
    <dbReference type="NCBI Taxonomy" id="470137"/>
    <lineage>
        <taxon>Bacteria</taxon>
        <taxon>Pseudomonadati</taxon>
        <taxon>Pseudomonadota</taxon>
        <taxon>Alphaproteobacteria</taxon>
        <taxon>Hyphomicrobiales</taxon>
        <taxon>Brucellaceae</taxon>
        <taxon>Brucella/Ochrobactrum group</taxon>
        <taxon>Brucella</taxon>
    </lineage>
</organism>
<evidence type="ECO:0000255" key="1">
    <source>
        <dbReference type="HAMAP-Rule" id="MF_01629"/>
    </source>
</evidence>
<keyword id="KW-0285">Flavoprotein</keyword>
<keyword id="KW-0288">FMN</keyword>
<keyword id="KW-0560">Oxidoreductase</keyword>
<keyword id="KW-0664">Pyridoxine biosynthesis</keyword>
<feature type="chain" id="PRO_0000335782" description="Pyridoxine/pyridoxamine 5'-phosphate oxidase">
    <location>
        <begin position="1"/>
        <end position="203"/>
    </location>
</feature>
<feature type="binding site" evidence="1">
    <location>
        <begin position="50"/>
        <end position="55"/>
    </location>
    <ligand>
        <name>FMN</name>
        <dbReference type="ChEBI" id="CHEBI:58210"/>
    </ligand>
</feature>
<feature type="binding site" evidence="1">
    <location>
        <position position="55"/>
    </location>
    <ligand>
        <name>substrate</name>
    </ligand>
</feature>
<feature type="binding site" evidence="1">
    <location>
        <begin position="65"/>
        <end position="66"/>
    </location>
    <ligand>
        <name>FMN</name>
        <dbReference type="ChEBI" id="CHEBI:58210"/>
    </ligand>
</feature>
<feature type="binding site" evidence="1">
    <location>
        <position position="71"/>
    </location>
    <ligand>
        <name>FMN</name>
        <dbReference type="ChEBI" id="CHEBI:58210"/>
    </ligand>
</feature>
<feature type="binding site" evidence="1">
    <location>
        <position position="72"/>
    </location>
    <ligand>
        <name>FMN</name>
        <dbReference type="ChEBI" id="CHEBI:58210"/>
    </ligand>
</feature>
<feature type="binding site" evidence="1">
    <location>
        <position position="94"/>
    </location>
    <ligand>
        <name>FMN</name>
        <dbReference type="ChEBI" id="CHEBI:58210"/>
    </ligand>
</feature>
<feature type="binding site" evidence="1">
    <location>
        <position position="112"/>
    </location>
    <ligand>
        <name>substrate</name>
    </ligand>
</feature>
<feature type="binding site" evidence="1">
    <location>
        <position position="116"/>
    </location>
    <ligand>
        <name>substrate</name>
    </ligand>
</feature>
<feature type="binding site" evidence="1">
    <location>
        <position position="120"/>
    </location>
    <ligand>
        <name>substrate</name>
    </ligand>
</feature>
<feature type="binding site" evidence="1">
    <location>
        <begin position="129"/>
        <end position="130"/>
    </location>
    <ligand>
        <name>FMN</name>
        <dbReference type="ChEBI" id="CHEBI:58210"/>
    </ligand>
</feature>
<feature type="binding site" evidence="1">
    <location>
        <position position="174"/>
    </location>
    <ligand>
        <name>FMN</name>
        <dbReference type="ChEBI" id="CHEBI:58210"/>
    </ligand>
</feature>
<feature type="binding site" evidence="1">
    <location>
        <begin position="180"/>
        <end position="182"/>
    </location>
    <ligand>
        <name>substrate</name>
    </ligand>
</feature>
<feature type="binding site" evidence="1">
    <location>
        <position position="184"/>
    </location>
    <ligand>
        <name>FMN</name>
        <dbReference type="ChEBI" id="CHEBI:58210"/>
    </ligand>
</feature>
<comment type="function">
    <text evidence="1">Catalyzes the oxidation of either pyridoxine 5'-phosphate (PNP) or pyridoxamine 5'-phosphate (PMP) into pyridoxal 5'-phosphate (PLP).</text>
</comment>
<comment type="catalytic activity">
    <reaction evidence="1">
        <text>pyridoxamine 5'-phosphate + O2 + H2O = pyridoxal 5'-phosphate + H2O2 + NH4(+)</text>
        <dbReference type="Rhea" id="RHEA:15817"/>
        <dbReference type="ChEBI" id="CHEBI:15377"/>
        <dbReference type="ChEBI" id="CHEBI:15379"/>
        <dbReference type="ChEBI" id="CHEBI:16240"/>
        <dbReference type="ChEBI" id="CHEBI:28938"/>
        <dbReference type="ChEBI" id="CHEBI:58451"/>
        <dbReference type="ChEBI" id="CHEBI:597326"/>
        <dbReference type="EC" id="1.4.3.5"/>
    </reaction>
</comment>
<comment type="catalytic activity">
    <reaction evidence="1">
        <text>pyridoxine 5'-phosphate + O2 = pyridoxal 5'-phosphate + H2O2</text>
        <dbReference type="Rhea" id="RHEA:15149"/>
        <dbReference type="ChEBI" id="CHEBI:15379"/>
        <dbReference type="ChEBI" id="CHEBI:16240"/>
        <dbReference type="ChEBI" id="CHEBI:58589"/>
        <dbReference type="ChEBI" id="CHEBI:597326"/>
        <dbReference type="EC" id="1.4.3.5"/>
    </reaction>
</comment>
<comment type="cofactor">
    <cofactor evidence="1">
        <name>FMN</name>
        <dbReference type="ChEBI" id="CHEBI:58210"/>
    </cofactor>
    <text evidence="1">Binds 1 FMN per subunit.</text>
</comment>
<comment type="pathway">
    <text evidence="1">Cofactor metabolism; pyridoxal 5'-phosphate salvage; pyridoxal 5'-phosphate from pyridoxamine 5'-phosphate: step 1/1.</text>
</comment>
<comment type="pathway">
    <text evidence="1">Cofactor metabolism; pyridoxal 5'-phosphate salvage; pyridoxal 5'-phosphate from pyridoxine 5'-phosphate: step 1/1.</text>
</comment>
<comment type="subunit">
    <text evidence="1">Homodimer.</text>
</comment>
<comment type="similarity">
    <text evidence="1">Belongs to the pyridoxamine 5'-phosphate oxidase family.</text>
</comment>
<gene>
    <name evidence="1" type="primary">pdxH</name>
    <name type="ordered locus">BSUIS_A0442</name>
</gene>
<dbReference type="EC" id="1.4.3.5" evidence="1"/>
<dbReference type="EMBL" id="CP000911">
    <property type="protein sequence ID" value="ABY37532.1"/>
    <property type="molecule type" value="Genomic_DNA"/>
</dbReference>
<dbReference type="RefSeq" id="WP_002971565.1">
    <property type="nucleotide sequence ID" value="NC_010169.1"/>
</dbReference>
<dbReference type="SMR" id="B0CKA2"/>
<dbReference type="GeneID" id="97534209"/>
<dbReference type="KEGG" id="bmt:BSUIS_A0442"/>
<dbReference type="HOGENOM" id="CLU_032263_2_3_5"/>
<dbReference type="UniPathway" id="UPA01068">
    <property type="reaction ID" value="UER00304"/>
</dbReference>
<dbReference type="UniPathway" id="UPA01068">
    <property type="reaction ID" value="UER00305"/>
</dbReference>
<dbReference type="Proteomes" id="UP000008545">
    <property type="component" value="Chromosome I"/>
</dbReference>
<dbReference type="GO" id="GO:0010181">
    <property type="term" value="F:FMN binding"/>
    <property type="evidence" value="ECO:0007669"/>
    <property type="project" value="UniProtKB-UniRule"/>
</dbReference>
<dbReference type="GO" id="GO:0004733">
    <property type="term" value="F:pyridoxamine phosphate oxidase activity"/>
    <property type="evidence" value="ECO:0007669"/>
    <property type="project" value="UniProtKB-UniRule"/>
</dbReference>
<dbReference type="GO" id="GO:0008615">
    <property type="term" value="P:pyridoxine biosynthetic process"/>
    <property type="evidence" value="ECO:0007669"/>
    <property type="project" value="UniProtKB-KW"/>
</dbReference>
<dbReference type="Gene3D" id="2.30.110.10">
    <property type="entry name" value="Electron Transport, Fmn-binding Protein, Chain A"/>
    <property type="match status" value="1"/>
</dbReference>
<dbReference type="HAMAP" id="MF_01629">
    <property type="entry name" value="PdxH"/>
    <property type="match status" value="1"/>
</dbReference>
<dbReference type="InterPro" id="IPR000659">
    <property type="entry name" value="Pyridox_Oxase"/>
</dbReference>
<dbReference type="InterPro" id="IPR019740">
    <property type="entry name" value="Pyridox_Oxase_CS"/>
</dbReference>
<dbReference type="InterPro" id="IPR011576">
    <property type="entry name" value="Pyridox_Oxase_N"/>
</dbReference>
<dbReference type="InterPro" id="IPR019576">
    <property type="entry name" value="Pyridoxamine_oxidase_dimer_C"/>
</dbReference>
<dbReference type="InterPro" id="IPR012349">
    <property type="entry name" value="Split_barrel_FMN-bd"/>
</dbReference>
<dbReference type="NCBIfam" id="TIGR00558">
    <property type="entry name" value="pdxH"/>
    <property type="match status" value="1"/>
</dbReference>
<dbReference type="NCBIfam" id="NF004231">
    <property type="entry name" value="PRK05679.1"/>
    <property type="match status" value="1"/>
</dbReference>
<dbReference type="PANTHER" id="PTHR10851:SF0">
    <property type="entry name" value="PYRIDOXINE-5'-PHOSPHATE OXIDASE"/>
    <property type="match status" value="1"/>
</dbReference>
<dbReference type="PANTHER" id="PTHR10851">
    <property type="entry name" value="PYRIDOXINE-5-PHOSPHATE OXIDASE"/>
    <property type="match status" value="1"/>
</dbReference>
<dbReference type="Pfam" id="PF10590">
    <property type="entry name" value="PNP_phzG_C"/>
    <property type="match status" value="1"/>
</dbReference>
<dbReference type="Pfam" id="PF01243">
    <property type="entry name" value="PNPOx_N"/>
    <property type="match status" value="1"/>
</dbReference>
<dbReference type="PIRSF" id="PIRSF000190">
    <property type="entry name" value="Pyd_amn-ph_oxd"/>
    <property type="match status" value="1"/>
</dbReference>
<dbReference type="SUPFAM" id="SSF50475">
    <property type="entry name" value="FMN-binding split barrel"/>
    <property type="match status" value="1"/>
</dbReference>
<dbReference type="PROSITE" id="PS01064">
    <property type="entry name" value="PYRIDOX_OXIDASE"/>
    <property type="match status" value="1"/>
</dbReference>
<accession>B0CKA2</accession>
<proteinExistence type="inferred from homology"/>
<sequence length="203" mass="23281">MTNSSDDFTQSAEPFKLFAEWLADAAKSEPNDPNAVALATVDPDGLPNVRMVLLKDFDETGFVFYTNYESKKGQEILSAEKAAMCFHWKSLRRQVRVRGPVEKVSDAEADAYYASRPRGSRIGAWASKQSRPLESRFALEKAVAEYTAKYAIGDIPRPPYWSGFRIRPVSIEFWHDRPFRLHDRVLFTRPTPEGDWNKDRLYP</sequence>
<protein>
    <recommendedName>
        <fullName evidence="1">Pyridoxine/pyridoxamine 5'-phosphate oxidase</fullName>
        <ecNumber evidence="1">1.4.3.5</ecNumber>
    </recommendedName>
    <alternativeName>
        <fullName evidence="1">PNP/PMP oxidase</fullName>
        <shortName evidence="1">PNPOx</shortName>
    </alternativeName>
    <alternativeName>
        <fullName evidence="1">Pyridoxal 5'-phosphate synthase</fullName>
    </alternativeName>
</protein>